<evidence type="ECO:0000255" key="1">
    <source>
        <dbReference type="HAMAP-Rule" id="MF_00812"/>
    </source>
</evidence>
<proteinExistence type="inferred from homology"/>
<gene>
    <name evidence="1" type="primary">tpm</name>
    <name type="ordered locus">Pfl01_3985</name>
</gene>
<reference key="1">
    <citation type="journal article" date="2009" name="Genome Biol.">
        <title>Genomic and genetic analyses of diversity and plant interactions of Pseudomonas fluorescens.</title>
        <authorList>
            <person name="Silby M.W."/>
            <person name="Cerdeno-Tarraga A.M."/>
            <person name="Vernikos G.S."/>
            <person name="Giddens S.R."/>
            <person name="Jackson R.W."/>
            <person name="Preston G.M."/>
            <person name="Zhang X.-X."/>
            <person name="Moon C.D."/>
            <person name="Gehrig S.M."/>
            <person name="Godfrey S.A.C."/>
            <person name="Knight C.G."/>
            <person name="Malone J.G."/>
            <person name="Robinson Z."/>
            <person name="Spiers A.J."/>
            <person name="Harris S."/>
            <person name="Challis G.L."/>
            <person name="Yaxley A.M."/>
            <person name="Harris D."/>
            <person name="Seeger K."/>
            <person name="Murphy L."/>
            <person name="Rutter S."/>
            <person name="Squares R."/>
            <person name="Quail M.A."/>
            <person name="Saunders E."/>
            <person name="Mavromatis K."/>
            <person name="Brettin T.S."/>
            <person name="Bentley S.D."/>
            <person name="Hothersall J."/>
            <person name="Stephens E."/>
            <person name="Thomas C.M."/>
            <person name="Parkhill J."/>
            <person name="Levy S.B."/>
            <person name="Rainey P.B."/>
            <person name="Thomson N.R."/>
        </authorList>
    </citation>
    <scope>NUCLEOTIDE SEQUENCE [LARGE SCALE GENOMIC DNA]</scope>
    <source>
        <strain>Pf0-1</strain>
    </source>
</reference>
<comment type="catalytic activity">
    <reaction evidence="1">
        <text>S-adenosyl-L-methionine + a thiopurine = S-adenosyl-L-homocysteine + a thiopurine S-methylether.</text>
        <dbReference type="EC" id="2.1.1.67"/>
    </reaction>
</comment>
<comment type="subcellular location">
    <subcellularLocation>
        <location evidence="1">Cytoplasm</location>
    </subcellularLocation>
</comment>
<comment type="similarity">
    <text evidence="1">Belongs to the class I-like SAM-binding methyltransferase superfamily. TPMT family.</text>
</comment>
<feature type="chain" id="PRO_1000047214" description="Thiopurine S-methyltransferase">
    <location>
        <begin position="1"/>
        <end position="217"/>
    </location>
</feature>
<feature type="binding site" evidence="1">
    <location>
        <position position="10"/>
    </location>
    <ligand>
        <name>S-adenosyl-L-methionine</name>
        <dbReference type="ChEBI" id="CHEBI:59789"/>
    </ligand>
</feature>
<feature type="binding site" evidence="1">
    <location>
        <position position="45"/>
    </location>
    <ligand>
        <name>S-adenosyl-L-methionine</name>
        <dbReference type="ChEBI" id="CHEBI:59789"/>
    </ligand>
</feature>
<feature type="binding site" evidence="1">
    <location>
        <position position="66"/>
    </location>
    <ligand>
        <name>S-adenosyl-L-methionine</name>
        <dbReference type="ChEBI" id="CHEBI:59789"/>
    </ligand>
</feature>
<feature type="binding site" evidence="1">
    <location>
        <position position="123"/>
    </location>
    <ligand>
        <name>S-adenosyl-L-methionine</name>
        <dbReference type="ChEBI" id="CHEBI:59789"/>
    </ligand>
</feature>
<protein>
    <recommendedName>
        <fullName evidence="1">Thiopurine S-methyltransferase</fullName>
        <ecNumber evidence="1">2.1.1.67</ecNumber>
    </recommendedName>
    <alternativeName>
        <fullName evidence="1">Thiopurine methyltransferase</fullName>
    </alternativeName>
</protein>
<keyword id="KW-0963">Cytoplasm</keyword>
<keyword id="KW-0489">Methyltransferase</keyword>
<keyword id="KW-0949">S-adenosyl-L-methionine</keyword>
<keyword id="KW-0808">Transferase</keyword>
<name>TPMT_PSEPF</name>
<organism>
    <name type="scientific">Pseudomonas fluorescens (strain Pf0-1)</name>
    <dbReference type="NCBI Taxonomy" id="205922"/>
    <lineage>
        <taxon>Bacteria</taxon>
        <taxon>Pseudomonadati</taxon>
        <taxon>Pseudomonadota</taxon>
        <taxon>Gammaproteobacteria</taxon>
        <taxon>Pseudomonadales</taxon>
        <taxon>Pseudomonadaceae</taxon>
        <taxon>Pseudomonas</taxon>
    </lineage>
</organism>
<accession>Q3K932</accession>
<sequence>MQPEFWHKKWESNQIGFHQLEVNPYLQRHWPDLAIPVQARVLVPLCGKSLDLLWLAGRGHQVLGVELSEKAVEDFFHEQQLQPQVSEQGDFKVYRADAVELWCGDFFSLTMADVAGCTALYDRAAVIALPPAMRERYAAHLQSILPACRGLLVTLDYDQSQMPGPPFSVDDAEVQRLLGSVWRVEMLEQQDVLGDSWKFVQAGVTRLEERVYRIRGV</sequence>
<dbReference type="EC" id="2.1.1.67" evidence="1"/>
<dbReference type="EMBL" id="CP000094">
    <property type="protein sequence ID" value="ABA75722.1"/>
    <property type="molecule type" value="Genomic_DNA"/>
</dbReference>
<dbReference type="RefSeq" id="WP_011335293.1">
    <property type="nucleotide sequence ID" value="NC_007492.2"/>
</dbReference>
<dbReference type="SMR" id="Q3K932"/>
<dbReference type="KEGG" id="pfo:Pfl01_3985"/>
<dbReference type="eggNOG" id="COG0500">
    <property type="taxonomic scope" value="Bacteria"/>
</dbReference>
<dbReference type="HOGENOM" id="CLU_085515_1_0_6"/>
<dbReference type="Proteomes" id="UP000002704">
    <property type="component" value="Chromosome"/>
</dbReference>
<dbReference type="GO" id="GO:0005737">
    <property type="term" value="C:cytoplasm"/>
    <property type="evidence" value="ECO:0007669"/>
    <property type="project" value="UniProtKB-SubCell"/>
</dbReference>
<dbReference type="GO" id="GO:0008119">
    <property type="term" value="F:thiopurine S-methyltransferase activity"/>
    <property type="evidence" value="ECO:0007669"/>
    <property type="project" value="UniProtKB-UniRule"/>
</dbReference>
<dbReference type="GO" id="GO:0032259">
    <property type="term" value="P:methylation"/>
    <property type="evidence" value="ECO:0007669"/>
    <property type="project" value="UniProtKB-KW"/>
</dbReference>
<dbReference type="GO" id="GO:0010038">
    <property type="term" value="P:response to metal ion"/>
    <property type="evidence" value="ECO:0007669"/>
    <property type="project" value="InterPro"/>
</dbReference>
<dbReference type="FunFam" id="3.40.50.150:FF:000101">
    <property type="entry name" value="Thiopurine S-methyltransferase"/>
    <property type="match status" value="1"/>
</dbReference>
<dbReference type="Gene3D" id="3.40.50.150">
    <property type="entry name" value="Vaccinia Virus protein VP39"/>
    <property type="match status" value="1"/>
</dbReference>
<dbReference type="HAMAP" id="MF_00812">
    <property type="entry name" value="Thiopur_methtran"/>
    <property type="match status" value="1"/>
</dbReference>
<dbReference type="InterPro" id="IPR029063">
    <property type="entry name" value="SAM-dependent_MTases_sf"/>
</dbReference>
<dbReference type="InterPro" id="IPR022474">
    <property type="entry name" value="Thiopur_S-MeTfrase_Se/Te_detox"/>
</dbReference>
<dbReference type="InterPro" id="IPR025835">
    <property type="entry name" value="Thiopurine_S-MeTrfase"/>
</dbReference>
<dbReference type="InterPro" id="IPR008854">
    <property type="entry name" value="TPMT"/>
</dbReference>
<dbReference type="NCBIfam" id="NF009732">
    <property type="entry name" value="PRK13255.1"/>
    <property type="match status" value="1"/>
</dbReference>
<dbReference type="NCBIfam" id="TIGR03840">
    <property type="entry name" value="TMPT_Se_Te"/>
    <property type="match status" value="1"/>
</dbReference>
<dbReference type="PANTHER" id="PTHR10259">
    <property type="entry name" value="THIOPURINE S-METHYLTRANSFERASE"/>
    <property type="match status" value="1"/>
</dbReference>
<dbReference type="PANTHER" id="PTHR10259:SF11">
    <property type="entry name" value="THIOPURINE S-METHYLTRANSFERASE"/>
    <property type="match status" value="1"/>
</dbReference>
<dbReference type="Pfam" id="PF05724">
    <property type="entry name" value="TPMT"/>
    <property type="match status" value="1"/>
</dbReference>
<dbReference type="PIRSF" id="PIRSF023956">
    <property type="entry name" value="Thiopurine_S-methyltransferase"/>
    <property type="match status" value="1"/>
</dbReference>
<dbReference type="SUPFAM" id="SSF53335">
    <property type="entry name" value="S-adenosyl-L-methionine-dependent methyltransferases"/>
    <property type="match status" value="1"/>
</dbReference>
<dbReference type="PROSITE" id="PS51585">
    <property type="entry name" value="SAM_MT_TPMT"/>
    <property type="match status" value="1"/>
</dbReference>